<name>S10A3_RAT</name>
<proteinExistence type="evidence at protein level"/>
<accession>P62819</accession>
<accession>P56566</accession>
<dbReference type="EMBL" id="AF140231">
    <property type="protein sequence ID" value="AAK28305.1"/>
    <property type="molecule type" value="mRNA"/>
</dbReference>
<dbReference type="RefSeq" id="NP_446133.1">
    <property type="nucleotide sequence ID" value="NM_053681.1"/>
</dbReference>
<dbReference type="RefSeq" id="XP_006232621.1">
    <property type="nucleotide sequence ID" value="XM_006232559.5"/>
</dbReference>
<dbReference type="RefSeq" id="XP_006232622.1">
    <property type="nucleotide sequence ID" value="XM_006232560.5"/>
</dbReference>
<dbReference type="RefSeq" id="XP_006232625.1">
    <property type="nucleotide sequence ID" value="XM_006232563.5"/>
</dbReference>
<dbReference type="RefSeq" id="XP_017446066.1">
    <property type="nucleotide sequence ID" value="XM_017590577.3"/>
</dbReference>
<dbReference type="RefSeq" id="XP_017446067.1">
    <property type="nucleotide sequence ID" value="XM_017590578.3"/>
</dbReference>
<dbReference type="RefSeq" id="XP_017446068.1">
    <property type="nucleotide sequence ID" value="XM_017590579.1"/>
</dbReference>
<dbReference type="RefSeq" id="XP_017446069.1">
    <property type="nucleotide sequence ID" value="XM_017590580.3"/>
</dbReference>
<dbReference type="SMR" id="P62819"/>
<dbReference type="FunCoup" id="P62819">
    <property type="interactions" value="68"/>
</dbReference>
<dbReference type="STRING" id="10116.ENSRNOP00000074528"/>
<dbReference type="PaxDb" id="10116-ENSRNOP00000016034"/>
<dbReference type="GeneID" id="114216"/>
<dbReference type="KEGG" id="rno:114216"/>
<dbReference type="UCSC" id="RGD:620260">
    <property type="organism name" value="rat"/>
</dbReference>
<dbReference type="AGR" id="RGD:620260"/>
<dbReference type="CTD" id="6274"/>
<dbReference type="RGD" id="620260">
    <property type="gene designation" value="S100a3"/>
</dbReference>
<dbReference type="VEuPathDB" id="HostDB:ENSRNOG00000012008"/>
<dbReference type="eggNOG" id="ENOG502SSQB">
    <property type="taxonomic scope" value="Eukaryota"/>
</dbReference>
<dbReference type="HOGENOM" id="CLU_138624_2_0_1"/>
<dbReference type="InParanoid" id="P62819"/>
<dbReference type="OrthoDB" id="26525at2759"/>
<dbReference type="PhylomeDB" id="P62819"/>
<dbReference type="TreeFam" id="TF332727"/>
<dbReference type="PRO" id="PR:P62819"/>
<dbReference type="Proteomes" id="UP000002494">
    <property type="component" value="Chromosome 2"/>
</dbReference>
<dbReference type="Bgee" id="ENSRNOG00000012008">
    <property type="expression patterns" value="Expressed in thymus and 16 other cell types or tissues"/>
</dbReference>
<dbReference type="ExpressionAtlas" id="P62819">
    <property type="expression patterns" value="baseline and differential"/>
</dbReference>
<dbReference type="GO" id="GO:0005737">
    <property type="term" value="C:cytoplasm"/>
    <property type="evidence" value="ECO:0007669"/>
    <property type="project" value="UniProtKB-SubCell"/>
</dbReference>
<dbReference type="GO" id="GO:0005509">
    <property type="term" value="F:calcium ion binding"/>
    <property type="evidence" value="ECO:0000318"/>
    <property type="project" value="GO_Central"/>
</dbReference>
<dbReference type="GO" id="GO:0048306">
    <property type="term" value="F:calcium-dependent protein binding"/>
    <property type="evidence" value="ECO:0000318"/>
    <property type="project" value="GO_Central"/>
</dbReference>
<dbReference type="GO" id="GO:0046914">
    <property type="term" value="F:transition metal ion binding"/>
    <property type="evidence" value="ECO:0007669"/>
    <property type="project" value="InterPro"/>
</dbReference>
<dbReference type="CDD" id="cd00213">
    <property type="entry name" value="S-100"/>
    <property type="match status" value="1"/>
</dbReference>
<dbReference type="FunFam" id="1.10.238.10:FF:000230">
    <property type="entry name" value="Protein S100-A3"/>
    <property type="match status" value="1"/>
</dbReference>
<dbReference type="Gene3D" id="1.10.238.10">
    <property type="entry name" value="EF-hand"/>
    <property type="match status" value="1"/>
</dbReference>
<dbReference type="InterPro" id="IPR011992">
    <property type="entry name" value="EF-hand-dom_pair"/>
</dbReference>
<dbReference type="InterPro" id="IPR034325">
    <property type="entry name" value="S-100_dom"/>
</dbReference>
<dbReference type="InterPro" id="IPR001751">
    <property type="entry name" value="S100/CaBP7/8-like_CS"/>
</dbReference>
<dbReference type="InterPro" id="IPR013787">
    <property type="entry name" value="S100_Ca-bd_sub"/>
</dbReference>
<dbReference type="PANTHER" id="PTHR11639:SF12">
    <property type="entry name" value="PROTEIN S100-A3"/>
    <property type="match status" value="1"/>
</dbReference>
<dbReference type="PANTHER" id="PTHR11639">
    <property type="entry name" value="S100 CALCIUM-BINDING PROTEIN"/>
    <property type="match status" value="1"/>
</dbReference>
<dbReference type="Pfam" id="PF01023">
    <property type="entry name" value="S_100"/>
    <property type="match status" value="1"/>
</dbReference>
<dbReference type="SMART" id="SM01394">
    <property type="entry name" value="S_100"/>
    <property type="match status" value="1"/>
</dbReference>
<dbReference type="SUPFAM" id="SSF47473">
    <property type="entry name" value="EF-hand"/>
    <property type="match status" value="1"/>
</dbReference>
<dbReference type="PROSITE" id="PS00303">
    <property type="entry name" value="S100_CABP"/>
    <property type="match status" value="1"/>
</dbReference>
<comment type="function">
    <text evidence="1">Binds both calcium and zinc. May be involved in calcium-dependent cuticle cell differentiation, hair shaft and hair cuticular barrier formation (By similarity).</text>
</comment>
<comment type="subunit">
    <text evidence="1">Homodimer and homotetramer for the citrullinated form.</text>
</comment>
<comment type="subcellular location">
    <subcellularLocation>
        <location evidence="1">Cytoplasm</location>
    </subcellularLocation>
</comment>
<comment type="PTM">
    <text evidence="1">More than half of the arginine residues undergo citrullination by PAD1 and PAD2. Arg-51 is specifically citrullinated by PAD3 and promotes tetramerization (By similarity).</text>
</comment>
<comment type="similarity">
    <text evidence="3">Belongs to the S-100 family.</text>
</comment>
<sequence length="101" mass="11747">MTRPLEQAVAAIVCTFQEYAGRCGDKYKICQSELKELLQKELPTWTPSEFRECDYNKFMSVLDTNKDCEVDFGEYVRSLASLCLYCHEYFKECPPEPPCPQ</sequence>
<gene>
    <name type="primary">S100a3</name>
</gene>
<organism>
    <name type="scientific">Rattus norvegicus</name>
    <name type="common">Rat</name>
    <dbReference type="NCBI Taxonomy" id="10116"/>
    <lineage>
        <taxon>Eukaryota</taxon>
        <taxon>Metazoa</taxon>
        <taxon>Chordata</taxon>
        <taxon>Craniata</taxon>
        <taxon>Vertebrata</taxon>
        <taxon>Euteleostomi</taxon>
        <taxon>Mammalia</taxon>
        <taxon>Eutheria</taxon>
        <taxon>Euarchontoglires</taxon>
        <taxon>Glires</taxon>
        <taxon>Rodentia</taxon>
        <taxon>Myomorpha</taxon>
        <taxon>Muroidea</taxon>
        <taxon>Muridae</taxon>
        <taxon>Murinae</taxon>
        <taxon>Rattus</taxon>
    </lineage>
</organism>
<protein>
    <recommendedName>
        <fullName>Protein S100-A3</fullName>
    </recommendedName>
    <alternativeName>
        <fullName>Protein S-100E</fullName>
    </alternativeName>
    <alternativeName>
        <fullName>S100 calcium-binding protein A3</fullName>
    </alternativeName>
</protein>
<reference key="1">
    <citation type="submission" date="1999-04" db="EMBL/GenBank/DDBJ databases">
        <title>Expression of S100 genes in hair follicle epithelium.</title>
        <authorList>
            <person name="Ito M."/>
            <person name="Kizawa K."/>
        </authorList>
    </citation>
    <scope>NUCLEOTIDE SEQUENCE [MRNA]</scope>
    <source>
        <strain>Wistar</strain>
        <tissue>Hair follicle</tissue>
    </source>
</reference>
<reference key="2">
    <citation type="submission" date="2007-09" db="UniProtKB">
        <authorList>
            <person name="Lubec G."/>
            <person name="Kang S.U."/>
            <person name="Lubec S."/>
        </authorList>
    </citation>
    <scope>PROTEIN SEQUENCE OF 58-66</scope>
    <scope>IDENTIFICATION BY MASS SPECTROMETRY</scope>
    <source>
        <strain>Sprague-Dawley</strain>
        <tissue>Brain</tissue>
    </source>
</reference>
<evidence type="ECO:0000250" key="1"/>
<evidence type="ECO:0000255" key="2"/>
<evidence type="ECO:0000305" key="3"/>
<feature type="chain" id="PRO_0000143974" description="Protein S100-A3">
    <location>
        <begin position="1"/>
        <end position="101"/>
    </location>
</feature>
<feature type="domain" description="EF-hand 1">
    <location>
        <begin position="12"/>
        <end position="47"/>
    </location>
</feature>
<feature type="domain" description="EF-hand 2">
    <location>
        <begin position="50"/>
        <end position="85"/>
    </location>
</feature>
<feature type="binding site" evidence="2">
    <location>
        <position position="26"/>
    </location>
    <ligand>
        <name>Ca(2+)</name>
        <dbReference type="ChEBI" id="CHEBI:29108"/>
        <label>1</label>
        <note>low affinity</note>
    </ligand>
</feature>
<feature type="binding site" evidence="2">
    <location>
        <position position="63"/>
    </location>
    <ligand>
        <name>Ca(2+)</name>
        <dbReference type="ChEBI" id="CHEBI:29108"/>
        <label>2</label>
        <note>high affinity</note>
    </ligand>
</feature>
<feature type="binding site" evidence="2">
    <location>
        <position position="65"/>
    </location>
    <ligand>
        <name>Ca(2+)</name>
        <dbReference type="ChEBI" id="CHEBI:29108"/>
        <label>2</label>
        <note>high affinity</note>
    </ligand>
</feature>
<feature type="binding site" evidence="2">
    <location>
        <position position="67"/>
    </location>
    <ligand>
        <name>Ca(2+)</name>
        <dbReference type="ChEBI" id="CHEBI:29108"/>
        <label>2</label>
        <note>high affinity</note>
    </ligand>
</feature>
<feature type="binding site" evidence="2">
    <location>
        <position position="69"/>
    </location>
    <ligand>
        <name>Ca(2+)</name>
        <dbReference type="ChEBI" id="CHEBI:29108"/>
        <label>2</label>
        <note>high affinity</note>
    </ligand>
</feature>
<feature type="binding site" evidence="2">
    <location>
        <position position="74"/>
    </location>
    <ligand>
        <name>Ca(2+)</name>
        <dbReference type="ChEBI" id="CHEBI:29108"/>
        <label>2</label>
        <note>high affinity</note>
    </ligand>
</feature>
<feature type="binding site" evidence="1">
    <location>
        <position position="83"/>
    </location>
    <ligand>
        <name>Zn(2+)</name>
        <dbReference type="ChEBI" id="CHEBI:29105"/>
    </ligand>
</feature>
<feature type="binding site" evidence="1">
    <location>
        <position position="86"/>
    </location>
    <ligand>
        <name>Zn(2+)</name>
        <dbReference type="ChEBI" id="CHEBI:29105"/>
    </ligand>
</feature>
<feature type="binding site" evidence="1">
    <location>
        <position position="87"/>
    </location>
    <ligand>
        <name>Zn(2+)</name>
        <dbReference type="ChEBI" id="CHEBI:29105"/>
    </ligand>
</feature>
<feature type="binding site" evidence="1">
    <location>
        <position position="93"/>
    </location>
    <ligand>
        <name>Zn(2+)</name>
        <dbReference type="ChEBI" id="CHEBI:29105"/>
    </ligand>
</feature>
<feature type="modified residue" description="Citrulline; by PAD3" evidence="1">
    <location>
        <position position="51"/>
    </location>
</feature>
<feature type="disulfide bond" evidence="1">
    <location>
        <begin position="30"/>
        <end position="68"/>
    </location>
</feature>
<keyword id="KW-0106">Calcium</keyword>
<keyword id="KW-0164">Citrullination</keyword>
<keyword id="KW-0963">Cytoplasm</keyword>
<keyword id="KW-0903">Direct protein sequencing</keyword>
<keyword id="KW-1015">Disulfide bond</keyword>
<keyword id="KW-0479">Metal-binding</keyword>
<keyword id="KW-1185">Reference proteome</keyword>
<keyword id="KW-0677">Repeat</keyword>
<keyword id="KW-0862">Zinc</keyword>